<dbReference type="EMBL" id="CP000114">
    <property type="protein sequence ID" value="ABA46311.1"/>
    <property type="molecule type" value="Genomic_DNA"/>
</dbReference>
<dbReference type="RefSeq" id="WP_000331497.1">
    <property type="nucleotide sequence ID" value="NC_007432.1"/>
</dbReference>
<dbReference type="SMR" id="Q3K3U3"/>
<dbReference type="GeneID" id="66885045"/>
<dbReference type="KEGG" id="sak:SAK_0117"/>
<dbReference type="HOGENOM" id="CLU_074407_2_2_9"/>
<dbReference type="GO" id="GO:0022625">
    <property type="term" value="C:cytosolic large ribosomal subunit"/>
    <property type="evidence" value="ECO:0007669"/>
    <property type="project" value="TreeGrafter"/>
</dbReference>
<dbReference type="GO" id="GO:0003735">
    <property type="term" value="F:structural constituent of ribosome"/>
    <property type="evidence" value="ECO:0007669"/>
    <property type="project" value="InterPro"/>
</dbReference>
<dbReference type="GO" id="GO:0006412">
    <property type="term" value="P:translation"/>
    <property type="evidence" value="ECO:0007669"/>
    <property type="project" value="UniProtKB-UniRule"/>
</dbReference>
<dbReference type="FunFam" id="3.90.1030.10:FF:000002">
    <property type="entry name" value="50S ribosomal protein L17"/>
    <property type="match status" value="1"/>
</dbReference>
<dbReference type="Gene3D" id="3.90.1030.10">
    <property type="entry name" value="Ribosomal protein L17"/>
    <property type="match status" value="1"/>
</dbReference>
<dbReference type="HAMAP" id="MF_01368">
    <property type="entry name" value="Ribosomal_bL17"/>
    <property type="match status" value="1"/>
</dbReference>
<dbReference type="InterPro" id="IPR000456">
    <property type="entry name" value="Ribosomal_bL17"/>
</dbReference>
<dbReference type="InterPro" id="IPR047859">
    <property type="entry name" value="Ribosomal_bL17_CS"/>
</dbReference>
<dbReference type="InterPro" id="IPR036373">
    <property type="entry name" value="Ribosomal_bL17_sf"/>
</dbReference>
<dbReference type="NCBIfam" id="TIGR00059">
    <property type="entry name" value="L17"/>
    <property type="match status" value="1"/>
</dbReference>
<dbReference type="PANTHER" id="PTHR14413:SF16">
    <property type="entry name" value="LARGE RIBOSOMAL SUBUNIT PROTEIN BL17M"/>
    <property type="match status" value="1"/>
</dbReference>
<dbReference type="PANTHER" id="PTHR14413">
    <property type="entry name" value="RIBOSOMAL PROTEIN L17"/>
    <property type="match status" value="1"/>
</dbReference>
<dbReference type="Pfam" id="PF01196">
    <property type="entry name" value="Ribosomal_L17"/>
    <property type="match status" value="1"/>
</dbReference>
<dbReference type="SUPFAM" id="SSF64263">
    <property type="entry name" value="Prokaryotic ribosomal protein L17"/>
    <property type="match status" value="1"/>
</dbReference>
<dbReference type="PROSITE" id="PS01167">
    <property type="entry name" value="RIBOSOMAL_L17"/>
    <property type="match status" value="1"/>
</dbReference>
<accession>Q3K3U3</accession>
<feature type="chain" id="PRO_1000055952" description="Large ribosomal subunit protein bL17">
    <location>
        <begin position="1"/>
        <end position="128"/>
    </location>
</feature>
<sequence length="128" mass="14522">MAYRKLGRTSSQRKAMLRDLTTDLLINESIVTTEARAKEIRKTVEKMITLGKRGDLHARRQAAAYVRNEIASENYDEASDKYTSTTALQKLFDDIAPRYAERNGGYTRILKTEPRRGDAAPMAIIELV</sequence>
<organism>
    <name type="scientific">Streptococcus agalactiae serotype Ia (strain ATCC 27591 / A909 / CDC SS700)</name>
    <dbReference type="NCBI Taxonomy" id="205921"/>
    <lineage>
        <taxon>Bacteria</taxon>
        <taxon>Bacillati</taxon>
        <taxon>Bacillota</taxon>
        <taxon>Bacilli</taxon>
        <taxon>Lactobacillales</taxon>
        <taxon>Streptococcaceae</taxon>
        <taxon>Streptococcus</taxon>
    </lineage>
</organism>
<proteinExistence type="inferred from homology"/>
<comment type="subunit">
    <text evidence="1">Part of the 50S ribosomal subunit. Contacts protein L32.</text>
</comment>
<comment type="similarity">
    <text evidence="1">Belongs to the bacterial ribosomal protein bL17 family.</text>
</comment>
<name>RL17_STRA1</name>
<keyword id="KW-0687">Ribonucleoprotein</keyword>
<keyword id="KW-0689">Ribosomal protein</keyword>
<gene>
    <name evidence="1" type="primary">rplQ</name>
    <name type="ordered locus">SAK_0117</name>
</gene>
<reference key="1">
    <citation type="journal article" date="2005" name="Proc. Natl. Acad. Sci. U.S.A.">
        <title>Genome analysis of multiple pathogenic isolates of Streptococcus agalactiae: implications for the microbial 'pan-genome'.</title>
        <authorList>
            <person name="Tettelin H."/>
            <person name="Masignani V."/>
            <person name="Cieslewicz M.J."/>
            <person name="Donati C."/>
            <person name="Medini D."/>
            <person name="Ward N.L."/>
            <person name="Angiuoli S.V."/>
            <person name="Crabtree J."/>
            <person name="Jones A.L."/>
            <person name="Durkin A.S."/>
            <person name="DeBoy R.T."/>
            <person name="Davidsen T.M."/>
            <person name="Mora M."/>
            <person name="Scarselli M."/>
            <person name="Margarit y Ros I."/>
            <person name="Peterson J.D."/>
            <person name="Hauser C.R."/>
            <person name="Sundaram J.P."/>
            <person name="Nelson W.C."/>
            <person name="Madupu R."/>
            <person name="Brinkac L.M."/>
            <person name="Dodson R.J."/>
            <person name="Rosovitz M.J."/>
            <person name="Sullivan S.A."/>
            <person name="Daugherty S.C."/>
            <person name="Haft D.H."/>
            <person name="Selengut J."/>
            <person name="Gwinn M.L."/>
            <person name="Zhou L."/>
            <person name="Zafar N."/>
            <person name="Khouri H."/>
            <person name="Radune D."/>
            <person name="Dimitrov G."/>
            <person name="Watkins K."/>
            <person name="O'Connor K.J."/>
            <person name="Smith S."/>
            <person name="Utterback T.R."/>
            <person name="White O."/>
            <person name="Rubens C.E."/>
            <person name="Grandi G."/>
            <person name="Madoff L.C."/>
            <person name="Kasper D.L."/>
            <person name="Telford J.L."/>
            <person name="Wessels M.R."/>
            <person name="Rappuoli R."/>
            <person name="Fraser C.M."/>
        </authorList>
    </citation>
    <scope>NUCLEOTIDE SEQUENCE [LARGE SCALE GENOMIC DNA]</scope>
    <source>
        <strain>ATCC 27591 / A909 / CDC SS700</strain>
    </source>
</reference>
<evidence type="ECO:0000255" key="1">
    <source>
        <dbReference type="HAMAP-Rule" id="MF_01368"/>
    </source>
</evidence>
<evidence type="ECO:0000305" key="2"/>
<protein>
    <recommendedName>
        <fullName evidence="1">Large ribosomal subunit protein bL17</fullName>
    </recommendedName>
    <alternativeName>
        <fullName evidence="2">50S ribosomal protein L17</fullName>
    </alternativeName>
</protein>